<protein>
    <recommendedName>
        <fullName>Uncharacterized protein AMV185/G3L</fullName>
    </recommendedName>
</protein>
<reference key="1">
    <citation type="journal article" date="1991" name="J. Virol.">
        <title>Identification, cloning, and sequencing of a fragment of Amsacta moorei entomopoxvirus DNA containing the spheroidin gene and three vaccinia virus-related open reading frames.</title>
        <authorList>
            <person name="Hall R.L."/>
            <person name="Moyer R.W."/>
        </authorList>
    </citation>
    <scope>NUCLEOTIDE SEQUENCE [GENOMIC DNA]</scope>
</reference>
<reference key="2">
    <citation type="journal article" date="2000" name="Virology">
        <title>Complete genomic sequence of the Amsacta moorei entomopoxvirus: analysis and comparison with other poxviruses.</title>
        <authorList>
            <person name="Bawden A.L."/>
            <person name="Glassberg K.J."/>
            <person name="Diggans J."/>
            <person name="Shaw R."/>
            <person name="Farmerie W."/>
            <person name="Moyer R.W."/>
        </authorList>
    </citation>
    <scope>NUCLEOTIDE SEQUENCE [LARGE SCALE GENOMIC DNA]</scope>
</reference>
<accession>P29819</accession>
<name>V185_AMEPV</name>
<organismHost>
    <name type="scientific">Amsacta</name>
    <dbReference type="NCBI Taxonomy" id="340055"/>
</organismHost>
<keyword id="KW-1185">Reference proteome</keyword>
<organism>
    <name type="scientific">Amsacta moorei entomopoxvirus</name>
    <name type="common">AmEPV</name>
    <dbReference type="NCBI Taxonomy" id="28321"/>
    <lineage>
        <taxon>Viruses</taxon>
        <taxon>Varidnaviria</taxon>
        <taxon>Bamfordvirae</taxon>
        <taxon>Nucleocytoviricota</taxon>
        <taxon>Pokkesviricetes</taxon>
        <taxon>Chitovirales</taxon>
        <taxon>Poxviridae</taxon>
        <taxon>Entomopoxvirinae</taxon>
        <taxon>Betaentomopoxvirus</taxon>
    </lineage>
</organism>
<gene>
    <name type="ordered locus">AMV185</name>
    <name type="ORF">G3</name>
</gene>
<proteinExistence type="predicted"/>
<feature type="chain" id="PRO_0000099763" description="Uncharacterized protein AMV185/G3L">
    <location>
        <begin position="1"/>
        <end position="78"/>
    </location>
</feature>
<dbReference type="EMBL" id="M77182">
    <property type="protein sequence ID" value="AAA42381.1"/>
    <property type="molecule type" value="Genomic_DNA"/>
</dbReference>
<dbReference type="EMBL" id="AF250284">
    <property type="protein sequence ID" value="AAG02891.1"/>
    <property type="molecule type" value="Genomic_DNA"/>
</dbReference>
<dbReference type="PIR" id="C41561">
    <property type="entry name" value="WZVZG3"/>
</dbReference>
<dbReference type="RefSeq" id="NP_064967.1">
    <property type="nucleotide sequence ID" value="NC_002520.1"/>
</dbReference>
<dbReference type="GeneID" id="1494775"/>
<dbReference type="KEGG" id="vg:1494775"/>
<dbReference type="OrthoDB" id="26439at10239"/>
<dbReference type="Proteomes" id="UP000000872">
    <property type="component" value="Genome"/>
</dbReference>
<sequence length="78" mass="8834">MSSSKKNNLGYFNNLKTEEVSQSQVFKDNYRPGYYGLDTNAANPADVYNTESNKPSTVDVWGDKRLEGKIIPKSKKKK</sequence>